<feature type="chain" id="PRO_1000139708" description="Putative N-acetylmannosamine-6-phosphate 2-epimerase">
    <location>
        <begin position="1"/>
        <end position="229"/>
    </location>
</feature>
<accession>B7NDK1</accession>
<keyword id="KW-0119">Carbohydrate metabolism</keyword>
<keyword id="KW-0413">Isomerase</keyword>
<name>NANE_ECOLU</name>
<gene>
    <name evidence="1" type="primary">nanE</name>
    <name type="ordered locus">ECUMN_3697</name>
</gene>
<reference key="1">
    <citation type="journal article" date="2009" name="PLoS Genet.">
        <title>Organised genome dynamics in the Escherichia coli species results in highly diverse adaptive paths.</title>
        <authorList>
            <person name="Touchon M."/>
            <person name="Hoede C."/>
            <person name="Tenaillon O."/>
            <person name="Barbe V."/>
            <person name="Baeriswyl S."/>
            <person name="Bidet P."/>
            <person name="Bingen E."/>
            <person name="Bonacorsi S."/>
            <person name="Bouchier C."/>
            <person name="Bouvet O."/>
            <person name="Calteau A."/>
            <person name="Chiapello H."/>
            <person name="Clermont O."/>
            <person name="Cruveiller S."/>
            <person name="Danchin A."/>
            <person name="Diard M."/>
            <person name="Dossat C."/>
            <person name="Karoui M.E."/>
            <person name="Frapy E."/>
            <person name="Garry L."/>
            <person name="Ghigo J.M."/>
            <person name="Gilles A.M."/>
            <person name="Johnson J."/>
            <person name="Le Bouguenec C."/>
            <person name="Lescat M."/>
            <person name="Mangenot S."/>
            <person name="Martinez-Jehanne V."/>
            <person name="Matic I."/>
            <person name="Nassif X."/>
            <person name="Oztas S."/>
            <person name="Petit M.A."/>
            <person name="Pichon C."/>
            <person name="Rouy Z."/>
            <person name="Ruf C.S."/>
            <person name="Schneider D."/>
            <person name="Tourret J."/>
            <person name="Vacherie B."/>
            <person name="Vallenet D."/>
            <person name="Medigue C."/>
            <person name="Rocha E.P.C."/>
            <person name="Denamur E."/>
        </authorList>
    </citation>
    <scope>NUCLEOTIDE SEQUENCE [LARGE SCALE GENOMIC DNA]</scope>
    <source>
        <strain>UMN026 / ExPEC</strain>
    </source>
</reference>
<protein>
    <recommendedName>
        <fullName evidence="1">Putative N-acetylmannosamine-6-phosphate 2-epimerase</fullName>
        <ecNumber evidence="1">5.1.3.9</ecNumber>
    </recommendedName>
    <alternativeName>
        <fullName evidence="1">ManNAc-6-P epimerase</fullName>
    </alternativeName>
</protein>
<organism>
    <name type="scientific">Escherichia coli O17:K52:H18 (strain UMN026 / ExPEC)</name>
    <dbReference type="NCBI Taxonomy" id="585056"/>
    <lineage>
        <taxon>Bacteria</taxon>
        <taxon>Pseudomonadati</taxon>
        <taxon>Pseudomonadota</taxon>
        <taxon>Gammaproteobacteria</taxon>
        <taxon>Enterobacterales</taxon>
        <taxon>Enterobacteriaceae</taxon>
        <taxon>Escherichia</taxon>
    </lineage>
</organism>
<evidence type="ECO:0000255" key="1">
    <source>
        <dbReference type="HAMAP-Rule" id="MF_01235"/>
    </source>
</evidence>
<proteinExistence type="inferred from homology"/>
<comment type="function">
    <text evidence="1">Converts N-acetylmannosamine-6-phosphate (ManNAc-6-P) to N-acetylglucosamine-6-phosphate (GlcNAc-6-P).</text>
</comment>
<comment type="catalytic activity">
    <reaction evidence="1">
        <text>an N-acyl-D-glucosamine 6-phosphate = an N-acyl-D-mannosamine 6-phosphate</text>
        <dbReference type="Rhea" id="RHEA:23932"/>
        <dbReference type="ChEBI" id="CHEBI:57599"/>
        <dbReference type="ChEBI" id="CHEBI:57666"/>
        <dbReference type="EC" id="5.1.3.9"/>
    </reaction>
</comment>
<comment type="pathway">
    <text evidence="1">Amino-sugar metabolism; N-acetylneuraminate degradation; D-fructose 6-phosphate from N-acetylneuraminate: step 3/5.</text>
</comment>
<comment type="similarity">
    <text evidence="1">Belongs to the NanE family.</text>
</comment>
<dbReference type="EC" id="5.1.3.9" evidence="1"/>
<dbReference type="EMBL" id="CU928163">
    <property type="protein sequence ID" value="CAR14851.1"/>
    <property type="molecule type" value="Genomic_DNA"/>
</dbReference>
<dbReference type="RefSeq" id="WP_000054239.1">
    <property type="nucleotide sequence ID" value="NC_011751.1"/>
</dbReference>
<dbReference type="RefSeq" id="YP_002414356.1">
    <property type="nucleotide sequence ID" value="NC_011751.1"/>
</dbReference>
<dbReference type="SMR" id="B7NDK1"/>
<dbReference type="STRING" id="585056.ECUMN_3697"/>
<dbReference type="KEGG" id="eum:ECUMN_3697"/>
<dbReference type="PATRIC" id="fig|585056.7.peg.3879"/>
<dbReference type="HOGENOM" id="CLU_086300_0_0_6"/>
<dbReference type="UniPathway" id="UPA00629">
    <property type="reaction ID" value="UER00682"/>
</dbReference>
<dbReference type="Proteomes" id="UP000007097">
    <property type="component" value="Chromosome"/>
</dbReference>
<dbReference type="GO" id="GO:0005829">
    <property type="term" value="C:cytosol"/>
    <property type="evidence" value="ECO:0007669"/>
    <property type="project" value="TreeGrafter"/>
</dbReference>
<dbReference type="GO" id="GO:0047465">
    <property type="term" value="F:N-acylglucosamine-6-phosphate 2-epimerase activity"/>
    <property type="evidence" value="ECO:0007669"/>
    <property type="project" value="UniProtKB-EC"/>
</dbReference>
<dbReference type="GO" id="GO:0005975">
    <property type="term" value="P:carbohydrate metabolic process"/>
    <property type="evidence" value="ECO:0007669"/>
    <property type="project" value="UniProtKB-UniRule"/>
</dbReference>
<dbReference type="GO" id="GO:0006053">
    <property type="term" value="P:N-acetylmannosamine catabolic process"/>
    <property type="evidence" value="ECO:0007669"/>
    <property type="project" value="TreeGrafter"/>
</dbReference>
<dbReference type="GO" id="GO:0019262">
    <property type="term" value="P:N-acetylneuraminate catabolic process"/>
    <property type="evidence" value="ECO:0007669"/>
    <property type="project" value="UniProtKB-UniRule"/>
</dbReference>
<dbReference type="CDD" id="cd04729">
    <property type="entry name" value="NanE"/>
    <property type="match status" value="1"/>
</dbReference>
<dbReference type="FunFam" id="3.20.20.70:FF:000035">
    <property type="entry name" value="Putative N-acetylmannosamine-6-phosphate 2-epimerase"/>
    <property type="match status" value="1"/>
</dbReference>
<dbReference type="Gene3D" id="3.20.20.70">
    <property type="entry name" value="Aldolase class I"/>
    <property type="match status" value="1"/>
</dbReference>
<dbReference type="HAMAP" id="MF_01235">
    <property type="entry name" value="ManNAc6P_epimer"/>
    <property type="match status" value="1"/>
</dbReference>
<dbReference type="InterPro" id="IPR013785">
    <property type="entry name" value="Aldolase_TIM"/>
</dbReference>
<dbReference type="InterPro" id="IPR007260">
    <property type="entry name" value="NanE"/>
</dbReference>
<dbReference type="InterPro" id="IPR011060">
    <property type="entry name" value="RibuloseP-bd_barrel"/>
</dbReference>
<dbReference type="NCBIfam" id="NF002231">
    <property type="entry name" value="PRK01130.1"/>
    <property type="match status" value="1"/>
</dbReference>
<dbReference type="PANTHER" id="PTHR36204">
    <property type="entry name" value="N-ACETYLMANNOSAMINE-6-PHOSPHATE 2-EPIMERASE-RELATED"/>
    <property type="match status" value="1"/>
</dbReference>
<dbReference type="PANTHER" id="PTHR36204:SF1">
    <property type="entry name" value="N-ACETYLMANNOSAMINE-6-PHOSPHATE 2-EPIMERASE-RELATED"/>
    <property type="match status" value="1"/>
</dbReference>
<dbReference type="Pfam" id="PF04131">
    <property type="entry name" value="NanE"/>
    <property type="match status" value="1"/>
</dbReference>
<dbReference type="SUPFAM" id="SSF51366">
    <property type="entry name" value="Ribulose-phoshate binding barrel"/>
    <property type="match status" value="1"/>
</dbReference>
<sequence>MSLLAQLDQKIAANGGLIVSCQPVPDSPLDKPEIVAAMALAAEQAGAVAIRIEGVANLQATRAVVSVPIIGIVKRDLEDSPVRITAYIEDVDALAQAGADIIAIDGTDRPRPVPVETLLARIHHHGLLAMTDCSTPEDGLACQKLGAEIIGTTLSGYTTPETPEEPDLALVKTLSDAGCRVIAEGRYNTPAQAADAMRHGAWAVTVGSAITRLEHICQWYNTAMKKAVL</sequence>